<dbReference type="EC" id="3.4.-.-" evidence="1"/>
<dbReference type="EMBL" id="BA000002">
    <property type="protein sequence ID" value="BAA79058.2"/>
    <property type="molecule type" value="Genomic_DNA"/>
</dbReference>
<dbReference type="PIR" id="H72769">
    <property type="entry name" value="H72769"/>
</dbReference>
<dbReference type="RefSeq" id="WP_010865524.1">
    <property type="nucleotide sequence ID" value="NC_000854.2"/>
</dbReference>
<dbReference type="SMR" id="Q9YFV3"/>
<dbReference type="STRING" id="272557.APE_0147.1"/>
<dbReference type="EnsemblBacteria" id="BAA79058">
    <property type="protein sequence ID" value="BAA79058"/>
    <property type="gene ID" value="APE_0147.1"/>
</dbReference>
<dbReference type="GeneID" id="1445681"/>
<dbReference type="KEGG" id="ape:APE_0147.1"/>
<dbReference type="eggNOG" id="arCOG00458">
    <property type="taxonomic scope" value="Archaea"/>
</dbReference>
<dbReference type="Proteomes" id="UP000002518">
    <property type="component" value="Chromosome"/>
</dbReference>
<dbReference type="GO" id="GO:0008237">
    <property type="term" value="F:metallopeptidase activity"/>
    <property type="evidence" value="ECO:0007669"/>
    <property type="project" value="UniProtKB-UniRule"/>
</dbReference>
<dbReference type="GO" id="GO:0008270">
    <property type="term" value="F:zinc ion binding"/>
    <property type="evidence" value="ECO:0007669"/>
    <property type="project" value="UniProtKB-UniRule"/>
</dbReference>
<dbReference type="GO" id="GO:0006508">
    <property type="term" value="P:proteolysis"/>
    <property type="evidence" value="ECO:0007669"/>
    <property type="project" value="UniProtKB-UniRule"/>
</dbReference>
<dbReference type="CDD" id="cd11375">
    <property type="entry name" value="Peptidase_M54"/>
    <property type="match status" value="1"/>
</dbReference>
<dbReference type="Gene3D" id="3.40.390.10">
    <property type="entry name" value="Collagenase (Catalytic Domain)"/>
    <property type="match status" value="1"/>
</dbReference>
<dbReference type="HAMAP" id="MF_01842">
    <property type="entry name" value="Archaemetzincin"/>
    <property type="match status" value="1"/>
</dbReference>
<dbReference type="InterPro" id="IPR024079">
    <property type="entry name" value="MetalloPept_cat_dom_sf"/>
</dbReference>
<dbReference type="InterPro" id="IPR012962">
    <property type="entry name" value="Pept_M54_archaemetzincn"/>
</dbReference>
<dbReference type="InterPro" id="IPR012091">
    <property type="entry name" value="Pept_M54_archaemetzncn_arc/bac"/>
</dbReference>
<dbReference type="NCBIfam" id="NF033823">
    <property type="entry name" value="archmetzin"/>
    <property type="match status" value="1"/>
</dbReference>
<dbReference type="PANTHER" id="PTHR15910">
    <property type="entry name" value="ARCHAEMETZINCIN"/>
    <property type="match status" value="1"/>
</dbReference>
<dbReference type="PANTHER" id="PTHR15910:SF1">
    <property type="entry name" value="ARCHAEMETZINCIN-2"/>
    <property type="match status" value="1"/>
</dbReference>
<dbReference type="Pfam" id="PF07998">
    <property type="entry name" value="Peptidase_M54"/>
    <property type="match status" value="1"/>
</dbReference>
<dbReference type="SUPFAM" id="SSF55486">
    <property type="entry name" value="Metalloproteases ('zincins'), catalytic domain"/>
    <property type="match status" value="1"/>
</dbReference>
<proteinExistence type="inferred from homology"/>
<reference key="1">
    <citation type="journal article" date="1999" name="DNA Res.">
        <title>Complete genome sequence of an aerobic hyper-thermophilic crenarchaeon, Aeropyrum pernix K1.</title>
        <authorList>
            <person name="Kawarabayasi Y."/>
            <person name="Hino Y."/>
            <person name="Horikawa H."/>
            <person name="Yamazaki S."/>
            <person name="Haikawa Y."/>
            <person name="Jin-no K."/>
            <person name="Takahashi M."/>
            <person name="Sekine M."/>
            <person name="Baba S."/>
            <person name="Ankai A."/>
            <person name="Kosugi H."/>
            <person name="Hosoyama A."/>
            <person name="Fukui S."/>
            <person name="Nagai Y."/>
            <person name="Nishijima K."/>
            <person name="Nakazawa H."/>
            <person name="Takamiya M."/>
            <person name="Masuda S."/>
            <person name="Funahashi T."/>
            <person name="Tanaka T."/>
            <person name="Kudoh Y."/>
            <person name="Yamazaki J."/>
            <person name="Kushida N."/>
            <person name="Oguchi A."/>
            <person name="Aoki K."/>
            <person name="Kubota K."/>
            <person name="Nakamura Y."/>
            <person name="Nomura N."/>
            <person name="Sako Y."/>
            <person name="Kikuchi H."/>
        </authorList>
    </citation>
    <scope>NUCLEOTIDE SEQUENCE [LARGE SCALE GENOMIC DNA]</scope>
    <source>
        <strain>ATCC 700893 / DSM 11879 / JCM 9820 / NBRC 100138 / K1</strain>
    </source>
</reference>
<accession>Q9YFV3</accession>
<comment type="function">
    <text evidence="1">Probable zinc metalloprotease whose natural substrate is unknown.</text>
</comment>
<comment type="cofactor">
    <cofactor evidence="1">
        <name>Zn(2+)</name>
        <dbReference type="ChEBI" id="CHEBI:29105"/>
    </cofactor>
    <text evidence="1">Binds 2 Zn(2+) ions per subunit. One is catalytic, whereas the other seems to have a structural role.</text>
</comment>
<comment type="subunit">
    <text evidence="1">Monomer.</text>
</comment>
<comment type="similarity">
    <text evidence="1">Belongs to the peptidase M54 family.</text>
</comment>
<keyword id="KW-0378">Hydrolase</keyword>
<keyword id="KW-0479">Metal-binding</keyword>
<keyword id="KW-0482">Metalloprotease</keyword>
<keyword id="KW-0645">Protease</keyword>
<keyword id="KW-1185">Reference proteome</keyword>
<keyword id="KW-0862">Zinc</keyword>
<sequence>MESSLTFLLLPVGFPGEVLVTLARRAREAMPVPSLWLASTDPLEPPIEAYSWERMQFDAEKVNEHIHSVLYDYVREGIRIIGVVDADGYIPGFNFVFGLASTALGVATVYTRRLKTGGNGLYTERLLKEVLHEAGHLLGLDHCSNRECVMSFSRSVEEVDRKAPLFCSSCKAKLVLKYGSRGQ</sequence>
<name>AMZA_AERPE</name>
<gene>
    <name evidence="1" type="primary">amzA</name>
    <name type="ordered locus">APE_0147.1</name>
</gene>
<organism>
    <name type="scientific">Aeropyrum pernix (strain ATCC 700893 / DSM 11879 / JCM 9820 / NBRC 100138 / K1)</name>
    <dbReference type="NCBI Taxonomy" id="272557"/>
    <lineage>
        <taxon>Archaea</taxon>
        <taxon>Thermoproteota</taxon>
        <taxon>Thermoprotei</taxon>
        <taxon>Desulfurococcales</taxon>
        <taxon>Desulfurococcaceae</taxon>
        <taxon>Aeropyrum</taxon>
    </lineage>
</organism>
<evidence type="ECO:0000255" key="1">
    <source>
        <dbReference type="HAMAP-Rule" id="MF_01842"/>
    </source>
</evidence>
<feature type="chain" id="PRO_0000159622" description="Archaemetzincin">
    <location>
        <begin position="1"/>
        <end position="183"/>
    </location>
</feature>
<feature type="active site" description="Proton acceptor" evidence="1">
    <location>
        <position position="133"/>
    </location>
</feature>
<feature type="binding site" evidence="1">
    <location>
        <position position="132"/>
    </location>
    <ligand>
        <name>Zn(2+)</name>
        <dbReference type="ChEBI" id="CHEBI:29105"/>
        <label>1</label>
        <note>catalytic</note>
    </ligand>
</feature>
<feature type="binding site" evidence="1">
    <location>
        <position position="136"/>
    </location>
    <ligand>
        <name>Zn(2+)</name>
        <dbReference type="ChEBI" id="CHEBI:29105"/>
        <label>1</label>
        <note>catalytic</note>
    </ligand>
</feature>
<feature type="binding site" evidence="1">
    <location>
        <position position="142"/>
    </location>
    <ligand>
        <name>Zn(2+)</name>
        <dbReference type="ChEBI" id="CHEBI:29105"/>
        <label>1</label>
        <note>catalytic</note>
    </ligand>
</feature>
<feature type="binding site" evidence="1">
    <location>
        <position position="143"/>
    </location>
    <ligand>
        <name>Zn(2+)</name>
        <dbReference type="ChEBI" id="CHEBI:29105"/>
        <label>2</label>
    </ligand>
</feature>
<feature type="binding site" evidence="1">
    <location>
        <position position="148"/>
    </location>
    <ligand>
        <name>Zn(2+)</name>
        <dbReference type="ChEBI" id="CHEBI:29105"/>
        <label>2</label>
    </ligand>
</feature>
<feature type="binding site" evidence="1">
    <location>
        <position position="167"/>
    </location>
    <ligand>
        <name>Zn(2+)</name>
        <dbReference type="ChEBI" id="CHEBI:29105"/>
        <label>2</label>
    </ligand>
</feature>
<feature type="binding site" evidence="1">
    <location>
        <position position="170"/>
    </location>
    <ligand>
        <name>Zn(2+)</name>
        <dbReference type="ChEBI" id="CHEBI:29105"/>
        <label>2</label>
    </ligand>
</feature>
<protein>
    <recommendedName>
        <fullName evidence="1">Archaemetzincin</fullName>
        <ecNumber evidence="1">3.4.-.-</ecNumber>
    </recommendedName>
</protein>